<dbReference type="EC" id="3.6.1.31" evidence="1"/>
<dbReference type="EMBL" id="CP000348">
    <property type="protein sequence ID" value="ABJ79966.1"/>
    <property type="molecule type" value="Genomic_DNA"/>
</dbReference>
<dbReference type="RefSeq" id="WP_002723023.1">
    <property type="nucleotide sequence ID" value="NC_008508.1"/>
</dbReference>
<dbReference type="SMR" id="Q04Y79"/>
<dbReference type="GeneID" id="61172669"/>
<dbReference type="KEGG" id="lbl:LBL_2606"/>
<dbReference type="HOGENOM" id="CLU_123337_1_2_12"/>
<dbReference type="UniPathway" id="UPA00031">
    <property type="reaction ID" value="UER00007"/>
</dbReference>
<dbReference type="GO" id="GO:0005737">
    <property type="term" value="C:cytoplasm"/>
    <property type="evidence" value="ECO:0007669"/>
    <property type="project" value="UniProtKB-SubCell"/>
</dbReference>
<dbReference type="GO" id="GO:0005524">
    <property type="term" value="F:ATP binding"/>
    <property type="evidence" value="ECO:0007669"/>
    <property type="project" value="UniProtKB-KW"/>
</dbReference>
<dbReference type="GO" id="GO:0004636">
    <property type="term" value="F:phosphoribosyl-ATP diphosphatase activity"/>
    <property type="evidence" value="ECO:0007669"/>
    <property type="project" value="UniProtKB-UniRule"/>
</dbReference>
<dbReference type="GO" id="GO:0000105">
    <property type="term" value="P:L-histidine biosynthetic process"/>
    <property type="evidence" value="ECO:0007669"/>
    <property type="project" value="UniProtKB-UniRule"/>
</dbReference>
<dbReference type="CDD" id="cd11534">
    <property type="entry name" value="NTP-PPase_HisIE_like"/>
    <property type="match status" value="1"/>
</dbReference>
<dbReference type="FunFam" id="1.10.287.1080:FF:000002">
    <property type="entry name" value="Histidine biosynthesis bifunctional protein HisIE"/>
    <property type="match status" value="1"/>
</dbReference>
<dbReference type="Gene3D" id="1.10.287.1080">
    <property type="entry name" value="MazG-like"/>
    <property type="match status" value="1"/>
</dbReference>
<dbReference type="HAMAP" id="MF_01020">
    <property type="entry name" value="HisE"/>
    <property type="match status" value="1"/>
</dbReference>
<dbReference type="InterPro" id="IPR008179">
    <property type="entry name" value="HisE"/>
</dbReference>
<dbReference type="InterPro" id="IPR021130">
    <property type="entry name" value="PRib-ATP_PPHydrolase-like"/>
</dbReference>
<dbReference type="NCBIfam" id="TIGR03188">
    <property type="entry name" value="histidine_hisI"/>
    <property type="match status" value="1"/>
</dbReference>
<dbReference type="NCBIfam" id="NF001611">
    <property type="entry name" value="PRK00400.1-3"/>
    <property type="match status" value="1"/>
</dbReference>
<dbReference type="PANTHER" id="PTHR42945">
    <property type="entry name" value="HISTIDINE BIOSYNTHESIS BIFUNCTIONAL PROTEIN"/>
    <property type="match status" value="1"/>
</dbReference>
<dbReference type="PANTHER" id="PTHR42945:SF9">
    <property type="entry name" value="HISTIDINE BIOSYNTHESIS BIFUNCTIONAL PROTEIN HISIE"/>
    <property type="match status" value="1"/>
</dbReference>
<dbReference type="Pfam" id="PF01503">
    <property type="entry name" value="PRA-PH"/>
    <property type="match status" value="1"/>
</dbReference>
<dbReference type="SUPFAM" id="SSF101386">
    <property type="entry name" value="all-alpha NTP pyrophosphatases"/>
    <property type="match status" value="1"/>
</dbReference>
<feature type="chain" id="PRO_1000063343" description="Phosphoribosyl-ATP pyrophosphatase">
    <location>
        <begin position="1"/>
        <end position="92"/>
    </location>
</feature>
<gene>
    <name evidence="1" type="primary">hisE</name>
    <name type="ordered locus">LBL_2606</name>
</gene>
<reference key="1">
    <citation type="journal article" date="2006" name="Proc. Natl. Acad. Sci. U.S.A.">
        <title>Genome reduction in Leptospira borgpetersenii reflects limited transmission potential.</title>
        <authorList>
            <person name="Bulach D.M."/>
            <person name="Zuerner R.L."/>
            <person name="Wilson P."/>
            <person name="Seemann T."/>
            <person name="McGrath A."/>
            <person name="Cullen P.A."/>
            <person name="Davis J."/>
            <person name="Johnson M."/>
            <person name="Kuczek E."/>
            <person name="Alt D.P."/>
            <person name="Peterson-Burch B."/>
            <person name="Coppel R.L."/>
            <person name="Rood J.I."/>
            <person name="Davies J.K."/>
            <person name="Adler B."/>
        </authorList>
    </citation>
    <scope>NUCLEOTIDE SEQUENCE [LARGE SCALE GENOMIC DNA]</scope>
    <source>
        <strain>L550</strain>
    </source>
</reference>
<keyword id="KW-0028">Amino-acid biosynthesis</keyword>
<keyword id="KW-0067">ATP-binding</keyword>
<keyword id="KW-0963">Cytoplasm</keyword>
<keyword id="KW-0368">Histidine biosynthesis</keyword>
<keyword id="KW-0378">Hydrolase</keyword>
<keyword id="KW-0547">Nucleotide-binding</keyword>
<protein>
    <recommendedName>
        <fullName evidence="1">Phosphoribosyl-ATP pyrophosphatase</fullName>
        <shortName evidence="1">PRA-PH</shortName>
        <ecNumber evidence="1">3.6.1.31</ecNumber>
    </recommendedName>
</protein>
<name>HIS2_LEPBL</name>
<evidence type="ECO:0000255" key="1">
    <source>
        <dbReference type="HAMAP-Rule" id="MF_01020"/>
    </source>
</evidence>
<comment type="catalytic activity">
    <reaction evidence="1">
        <text>1-(5-phospho-beta-D-ribosyl)-ATP + H2O = 1-(5-phospho-beta-D-ribosyl)-5'-AMP + diphosphate + H(+)</text>
        <dbReference type="Rhea" id="RHEA:22828"/>
        <dbReference type="ChEBI" id="CHEBI:15377"/>
        <dbReference type="ChEBI" id="CHEBI:15378"/>
        <dbReference type="ChEBI" id="CHEBI:33019"/>
        <dbReference type="ChEBI" id="CHEBI:59457"/>
        <dbReference type="ChEBI" id="CHEBI:73183"/>
        <dbReference type="EC" id="3.6.1.31"/>
    </reaction>
</comment>
<comment type="pathway">
    <text evidence="1">Amino-acid biosynthesis; L-histidine biosynthesis; L-histidine from 5-phospho-alpha-D-ribose 1-diphosphate: step 2/9.</text>
</comment>
<comment type="subcellular location">
    <subcellularLocation>
        <location evidence="1">Cytoplasm</location>
    </subcellularLocation>
</comment>
<comment type="similarity">
    <text evidence="1">Belongs to the PRA-PH family.</text>
</comment>
<accession>Q04Y79</accession>
<proteinExistence type="inferred from homology"/>
<organism>
    <name type="scientific">Leptospira borgpetersenii serovar Hardjo-bovis (strain L550)</name>
    <dbReference type="NCBI Taxonomy" id="355276"/>
    <lineage>
        <taxon>Bacteria</taxon>
        <taxon>Pseudomonadati</taxon>
        <taxon>Spirochaetota</taxon>
        <taxon>Spirochaetia</taxon>
        <taxon>Leptospirales</taxon>
        <taxon>Leptospiraceae</taxon>
        <taxon>Leptospira</taxon>
    </lineage>
</organism>
<sequence>MEFLLQLENILKKRKQDLPDKSYTADLFRGGVDRILKKVGEEAGEVIIAAKNSDKKELTHEAADLLFHLQVLLVEQELSLQDVVEELRKRHS</sequence>